<organism>
    <name type="scientific">Geodermatophilus obscurus (strain ATCC 25078 / DSM 43160 / JCM 3152 / CCUG 61914 / KCC A-0152 / KCTC 9177 / NBRC 13315 / NRRL B-3577 / G-20)</name>
    <dbReference type="NCBI Taxonomy" id="526225"/>
    <lineage>
        <taxon>Bacteria</taxon>
        <taxon>Bacillati</taxon>
        <taxon>Actinomycetota</taxon>
        <taxon>Actinomycetes</taxon>
        <taxon>Geodermatophilales</taxon>
        <taxon>Geodermatophilaceae</taxon>
        <taxon>Geodermatophilus</taxon>
    </lineage>
</organism>
<dbReference type="EC" id="6.3.1.13" evidence="1"/>
<dbReference type="EMBL" id="CP001867">
    <property type="protein sequence ID" value="ADB75303.1"/>
    <property type="molecule type" value="Genomic_DNA"/>
</dbReference>
<dbReference type="RefSeq" id="WP_012948736.1">
    <property type="nucleotide sequence ID" value="NC_013757.1"/>
</dbReference>
<dbReference type="SMR" id="D2S6C9"/>
<dbReference type="STRING" id="526225.Gobs_2668"/>
<dbReference type="KEGG" id="gob:Gobs_2668"/>
<dbReference type="eggNOG" id="COG0215">
    <property type="taxonomic scope" value="Bacteria"/>
</dbReference>
<dbReference type="HOGENOM" id="CLU_013528_0_0_11"/>
<dbReference type="OrthoDB" id="9815130at2"/>
<dbReference type="Proteomes" id="UP000001382">
    <property type="component" value="Chromosome"/>
</dbReference>
<dbReference type="GO" id="GO:0005829">
    <property type="term" value="C:cytosol"/>
    <property type="evidence" value="ECO:0007669"/>
    <property type="project" value="TreeGrafter"/>
</dbReference>
<dbReference type="GO" id="GO:0005524">
    <property type="term" value="F:ATP binding"/>
    <property type="evidence" value="ECO:0007669"/>
    <property type="project" value="UniProtKB-KW"/>
</dbReference>
<dbReference type="GO" id="GO:0035446">
    <property type="term" value="F:cysteine-glucosaminylinositol ligase activity"/>
    <property type="evidence" value="ECO:0007669"/>
    <property type="project" value="UniProtKB-UniRule"/>
</dbReference>
<dbReference type="GO" id="GO:0004817">
    <property type="term" value="F:cysteine-tRNA ligase activity"/>
    <property type="evidence" value="ECO:0007669"/>
    <property type="project" value="TreeGrafter"/>
</dbReference>
<dbReference type="GO" id="GO:0008270">
    <property type="term" value="F:zinc ion binding"/>
    <property type="evidence" value="ECO:0007669"/>
    <property type="project" value="UniProtKB-UniRule"/>
</dbReference>
<dbReference type="GO" id="GO:0006423">
    <property type="term" value="P:cysteinyl-tRNA aminoacylation"/>
    <property type="evidence" value="ECO:0007669"/>
    <property type="project" value="TreeGrafter"/>
</dbReference>
<dbReference type="GO" id="GO:0010125">
    <property type="term" value="P:mycothiol biosynthetic process"/>
    <property type="evidence" value="ECO:0007669"/>
    <property type="project" value="UniProtKB-UniRule"/>
</dbReference>
<dbReference type="FunFam" id="3.40.50.620:FF:000134">
    <property type="entry name" value="L-cysteine:1D-myo-inositol 2-amino-2-deoxy-alpha-D-glucopyranoside ligase"/>
    <property type="match status" value="1"/>
</dbReference>
<dbReference type="Gene3D" id="1.20.120.640">
    <property type="entry name" value="Anticodon-binding domain of a subclass of class I aminoacyl-tRNA synthetases"/>
    <property type="match status" value="1"/>
</dbReference>
<dbReference type="Gene3D" id="3.40.50.620">
    <property type="entry name" value="HUPs"/>
    <property type="match status" value="1"/>
</dbReference>
<dbReference type="HAMAP" id="MF_01697">
    <property type="entry name" value="MshC"/>
    <property type="match status" value="1"/>
</dbReference>
<dbReference type="InterPro" id="IPR024909">
    <property type="entry name" value="Cys-tRNA/MSH_ligase"/>
</dbReference>
<dbReference type="InterPro" id="IPR017812">
    <property type="entry name" value="Mycothiol_ligase_MshC"/>
</dbReference>
<dbReference type="InterPro" id="IPR014729">
    <property type="entry name" value="Rossmann-like_a/b/a_fold"/>
</dbReference>
<dbReference type="InterPro" id="IPR032678">
    <property type="entry name" value="tRNA-synt_1_cat_dom"/>
</dbReference>
<dbReference type="NCBIfam" id="TIGR03447">
    <property type="entry name" value="mycothiol_MshC"/>
    <property type="match status" value="1"/>
</dbReference>
<dbReference type="PANTHER" id="PTHR10890:SF3">
    <property type="entry name" value="CYSTEINE--TRNA LIGASE, CYTOPLASMIC"/>
    <property type="match status" value="1"/>
</dbReference>
<dbReference type="PANTHER" id="PTHR10890">
    <property type="entry name" value="CYSTEINYL-TRNA SYNTHETASE"/>
    <property type="match status" value="1"/>
</dbReference>
<dbReference type="Pfam" id="PF01406">
    <property type="entry name" value="tRNA-synt_1e"/>
    <property type="match status" value="1"/>
</dbReference>
<dbReference type="PRINTS" id="PR00983">
    <property type="entry name" value="TRNASYNTHCYS"/>
</dbReference>
<dbReference type="SUPFAM" id="SSF52374">
    <property type="entry name" value="Nucleotidylyl transferase"/>
    <property type="match status" value="1"/>
</dbReference>
<protein>
    <recommendedName>
        <fullName evidence="1">L-cysteine:1D-myo-inositol 2-amino-2-deoxy-alpha-D-glucopyranoside ligase</fullName>
        <shortName evidence="1">L-Cys:GlcN-Ins ligase</shortName>
        <ecNumber evidence="1">6.3.1.13</ecNumber>
    </recommendedName>
    <alternativeName>
        <fullName evidence="1">Mycothiol ligase</fullName>
        <shortName evidence="1">MSH ligase</shortName>
    </alternativeName>
</protein>
<keyword id="KW-0067">ATP-binding</keyword>
<keyword id="KW-0436">Ligase</keyword>
<keyword id="KW-0479">Metal-binding</keyword>
<keyword id="KW-0547">Nucleotide-binding</keyword>
<keyword id="KW-1185">Reference proteome</keyword>
<keyword id="KW-0862">Zinc</keyword>
<accession>D2S6C9</accession>
<reference key="1">
    <citation type="submission" date="2010-01" db="EMBL/GenBank/DDBJ databases">
        <title>The complete genome of Geodermatophilus obscurus DSM 43160.</title>
        <authorList>
            <consortium name="US DOE Joint Genome Institute (JGI-PGF)"/>
            <person name="Lucas S."/>
            <person name="Copeland A."/>
            <person name="Lapidus A."/>
            <person name="Glavina del Rio T."/>
            <person name="Dalin E."/>
            <person name="Tice H."/>
            <person name="Bruce D."/>
            <person name="Goodwin L."/>
            <person name="Pitluck S."/>
            <person name="Kyrpides N."/>
            <person name="Mavromatis K."/>
            <person name="Ivanova N."/>
            <person name="Munk A.C."/>
            <person name="Brettin T."/>
            <person name="Detter J.C."/>
            <person name="Han C."/>
            <person name="Larimer F."/>
            <person name="Land M."/>
            <person name="Hauser L."/>
            <person name="Markowitz V."/>
            <person name="Cheng J.-F."/>
            <person name="Hugenholtz P."/>
            <person name="Woyke T."/>
            <person name="Wu D."/>
            <person name="Jando M."/>
            <person name="Schneider S."/>
            <person name="Klenk H.-P."/>
            <person name="Eisen J.A."/>
        </authorList>
    </citation>
    <scope>NUCLEOTIDE SEQUENCE [LARGE SCALE GENOMIC DNA]</scope>
    <source>
        <strain>ATCC 25078 / DSM 43160 / JCM 3152 / CCUG 61914 / KCC A-0152 / KCTC 9177 / NBRC 13315 / NRRL B-3577 / G-20</strain>
    </source>
</reference>
<comment type="function">
    <text evidence="1">Catalyzes the ATP-dependent condensation of GlcN-Ins and L-cysteine to form L-Cys-GlcN-Ins.</text>
</comment>
<comment type="catalytic activity">
    <reaction evidence="1">
        <text>1D-myo-inositol 2-amino-2-deoxy-alpha-D-glucopyranoside + L-cysteine + ATP = 1D-myo-inositol 2-(L-cysteinylamino)-2-deoxy-alpha-D-glucopyranoside + AMP + diphosphate + H(+)</text>
        <dbReference type="Rhea" id="RHEA:26176"/>
        <dbReference type="ChEBI" id="CHEBI:15378"/>
        <dbReference type="ChEBI" id="CHEBI:30616"/>
        <dbReference type="ChEBI" id="CHEBI:33019"/>
        <dbReference type="ChEBI" id="CHEBI:35235"/>
        <dbReference type="ChEBI" id="CHEBI:58886"/>
        <dbReference type="ChEBI" id="CHEBI:58887"/>
        <dbReference type="ChEBI" id="CHEBI:456215"/>
        <dbReference type="EC" id="6.3.1.13"/>
    </reaction>
</comment>
<comment type="cofactor">
    <cofactor evidence="1">
        <name>Zn(2+)</name>
        <dbReference type="ChEBI" id="CHEBI:29105"/>
    </cofactor>
    <text evidence="1">Binds 1 zinc ion per subunit.</text>
</comment>
<comment type="subunit">
    <text evidence="1">Monomer.</text>
</comment>
<comment type="similarity">
    <text evidence="1">Belongs to the class-I aminoacyl-tRNA synthetase family. MshC subfamily.</text>
</comment>
<feature type="chain" id="PRO_0000400448" description="L-cysteine:1D-myo-inositol 2-amino-2-deoxy-alpha-D-glucopyranoside ligase">
    <location>
        <begin position="1"/>
        <end position="422"/>
    </location>
</feature>
<feature type="region of interest" description="Disordered" evidence="2">
    <location>
        <begin position="185"/>
        <end position="221"/>
    </location>
</feature>
<feature type="short sequence motif" description="'HIGH' region" evidence="1">
    <location>
        <begin position="45"/>
        <end position="55"/>
    </location>
</feature>
<feature type="short sequence motif" description="'ERGGDP' region" evidence="1">
    <location>
        <begin position="186"/>
        <end position="191"/>
    </location>
</feature>
<feature type="short sequence motif" description="'KMSKS' region" evidence="1">
    <location>
        <begin position="294"/>
        <end position="298"/>
    </location>
</feature>
<feature type="compositionally biased region" description="Basic and acidic residues" evidence="2">
    <location>
        <begin position="185"/>
        <end position="200"/>
    </location>
</feature>
<feature type="binding site" evidence="1">
    <location>
        <begin position="43"/>
        <end position="46"/>
    </location>
    <ligand>
        <name>L-cysteinyl-5'-AMP</name>
        <dbReference type="ChEBI" id="CHEBI:144924"/>
    </ligand>
</feature>
<feature type="binding site" evidence="1">
    <location>
        <position position="43"/>
    </location>
    <ligand>
        <name>Zn(2+)</name>
        <dbReference type="ChEBI" id="CHEBI:29105"/>
    </ligand>
</feature>
<feature type="binding site" evidence="1">
    <location>
        <position position="58"/>
    </location>
    <ligand>
        <name>L-cysteinyl-5'-AMP</name>
        <dbReference type="ChEBI" id="CHEBI:144924"/>
    </ligand>
</feature>
<feature type="binding site" evidence="1">
    <location>
        <begin position="81"/>
        <end position="83"/>
    </location>
    <ligand>
        <name>L-cysteinyl-5'-AMP</name>
        <dbReference type="ChEBI" id="CHEBI:144924"/>
    </ligand>
</feature>
<feature type="binding site" evidence="1">
    <location>
        <position position="227"/>
    </location>
    <ligand>
        <name>L-cysteinyl-5'-AMP</name>
        <dbReference type="ChEBI" id="CHEBI:144924"/>
    </ligand>
</feature>
<feature type="binding site" evidence="1">
    <location>
        <position position="231"/>
    </location>
    <ligand>
        <name>Zn(2+)</name>
        <dbReference type="ChEBI" id="CHEBI:29105"/>
    </ligand>
</feature>
<feature type="binding site" evidence="1">
    <location>
        <begin position="249"/>
        <end position="251"/>
    </location>
    <ligand>
        <name>L-cysteinyl-5'-AMP</name>
        <dbReference type="ChEBI" id="CHEBI:144924"/>
    </ligand>
</feature>
<feature type="binding site" evidence="1">
    <location>
        <position position="256"/>
    </location>
    <ligand>
        <name>Zn(2+)</name>
        <dbReference type="ChEBI" id="CHEBI:29105"/>
    </ligand>
</feature>
<feature type="binding site" evidence="1">
    <location>
        <position position="288"/>
    </location>
    <ligand>
        <name>L-cysteinyl-5'-AMP</name>
        <dbReference type="ChEBI" id="CHEBI:144924"/>
    </ligand>
</feature>
<proteinExistence type="inferred from homology"/>
<name>MSHC_GEOOG</name>
<gene>
    <name evidence="1" type="primary">mshC</name>
    <name type="ordered locus">Gobs_2668</name>
</gene>
<evidence type="ECO:0000255" key="1">
    <source>
        <dbReference type="HAMAP-Rule" id="MF_01697"/>
    </source>
</evidence>
<evidence type="ECO:0000256" key="2">
    <source>
        <dbReference type="SAM" id="MobiDB-lite"/>
    </source>
</evidence>
<sequence>MLAWPAPLLPTLPGSGPVLTLHDTARGEVVPTTPDTTARMYVCGITPYDATHLGHAATYLAFDLVNRVWRDAGHAVHYVQNVTDIDDPLLERAERDGEDWVVLGMRETALFREDMTALRVLPPDDYVGAVESVPRIVAHVETLLDEGLAYVLDDGTGDVYHDIAQAPGFGSESGYDEATMLRFSAERGGDPDRPGKRNRLDPMLWRGRRPGEPSWPGPRGVAGRPGWHIECATIALETIGMGFDVQGGGSDLVFPHHEFSAVHAEALTATVTGEKLPFARAYVHAAMIGLDGEKMSKSRGNLVFVSKLRGEGVDPMAIRLALLAGHYRTDRAWTPDLLAGAEQRLATWRRAVTRDAGAPAAEVLQGLRERLADDLDSPGAIALVDAWAERTLAATADEQEEGAPTIVCDAVDALLGVALQGC</sequence>